<protein>
    <recommendedName>
        <fullName evidence="3">[Thr6]-bradykinin</fullName>
    </recommendedName>
</protein>
<proteinExistence type="evidence at protein level"/>
<keyword id="KW-0878">Amphibian defense peptide</keyword>
<keyword id="KW-1222">Bradykinin receptor impairing toxin</keyword>
<keyword id="KW-0903">Direct protein sequencing</keyword>
<keyword id="KW-1213">G-protein coupled receptor impairing toxin</keyword>
<keyword id="KW-0964">Secreted</keyword>
<keyword id="KW-0800">Toxin</keyword>
<dbReference type="GO" id="GO:0005576">
    <property type="term" value="C:extracellular region"/>
    <property type="evidence" value="ECO:0007669"/>
    <property type="project" value="UniProtKB-SubCell"/>
</dbReference>
<dbReference type="GO" id="GO:0090729">
    <property type="term" value="F:toxin activity"/>
    <property type="evidence" value="ECO:0007669"/>
    <property type="project" value="UniProtKB-KW"/>
</dbReference>
<dbReference type="GO" id="GO:0006952">
    <property type="term" value="P:defense response"/>
    <property type="evidence" value="ECO:0007669"/>
    <property type="project" value="UniProtKB-KW"/>
</dbReference>
<reference evidence="4" key="1">
    <citation type="journal article" date="2011" name="Toxicon">
        <title>Peptidomic dissection of the skin secretion of Phasmahyla jandaia (Bokermann and Sazima, 1978) (Anura, Hylidae, Phyllomedusinae).</title>
        <authorList>
            <person name="Rates B."/>
            <person name="Silva L.P."/>
            <person name="Ireno I.C."/>
            <person name="Leite F.S."/>
            <person name="Borges M.H."/>
            <person name="Bloch C. Jr."/>
            <person name="De Lima M.E."/>
            <person name="Pimenta A.M."/>
        </authorList>
    </citation>
    <scope>PROTEIN SEQUENCE</scope>
    <scope>SUBCELLULAR LOCATION</scope>
    <scope>TISSUE SPECIFICITY</scope>
    <scope>MASS SPECTROMETRY</scope>
    <source>
        <tissue evidence="2">Skin secretion</tissue>
    </source>
</reference>
<organism>
    <name type="scientific">Phasmahyla jandaia</name>
    <name type="common">Jandaia leaf frog</name>
    <name type="synonym">Phyllomedusa jandaia</name>
    <dbReference type="NCBI Taxonomy" id="762504"/>
    <lineage>
        <taxon>Eukaryota</taxon>
        <taxon>Metazoa</taxon>
        <taxon>Chordata</taxon>
        <taxon>Craniata</taxon>
        <taxon>Vertebrata</taxon>
        <taxon>Euteleostomi</taxon>
        <taxon>Amphibia</taxon>
        <taxon>Batrachia</taxon>
        <taxon>Anura</taxon>
        <taxon>Neobatrachia</taxon>
        <taxon>Hyloidea</taxon>
        <taxon>Hylidae</taxon>
        <taxon>Phyllomedusinae</taxon>
        <taxon>Phasmahyla</taxon>
    </lineage>
</organism>
<evidence type="ECO:0000250" key="1"/>
<evidence type="ECO:0000269" key="2">
    <source>
    </source>
</evidence>
<evidence type="ECO:0000303" key="3">
    <source>
    </source>
</evidence>
<evidence type="ECO:0000305" key="4"/>
<comment type="function">
    <text evidence="1">[Thr6]-bradykinin: inhibits ACE with a Ki of 1.6 uM, and targets B2 bradykinin receptor (BDKRB2). Provokes contraction of smooth muscle preparation (ileum). In vivo, induces an early hyperalgesic effects in living rats after intraplantar injection (By similarity).</text>
</comment>
<comment type="subcellular location">
    <subcellularLocation>
        <location evidence="2">Secreted</location>
    </subcellularLocation>
</comment>
<comment type="tissue specificity">
    <text evidence="2">Expressed by the skin glands.</text>
</comment>
<comment type="mass spectrometry" mass="1073.6" method="MALDI" evidence="2"/>
<comment type="similarity">
    <text evidence="4">Belongs to the bradykinin-related peptide family.</text>
</comment>
<sequence length="9" mass="1074">RPPGFTPFR</sequence>
<name>BRK3_PHAJA</name>
<feature type="peptide" id="PRO_0000404632" description="[Thr6]-bradykinin" evidence="2">
    <location>
        <begin position="1"/>
        <end position="9"/>
    </location>
</feature>
<accession>P86629</accession>